<accession>Q8ZTB2</accession>
<name>MTAP_PYRAE</name>
<sequence>MVKLTNPPKSPKELGFDEFPSIGIIGGSGLYDPGIFENAVEVQIHTPYGLPSDNVIVGRVAGRVVAFLPRHGRGHKYPPHKIPYRANIYSLYMLGVRSIVAVSAVGSLRPDYAPGDFVVPDQFVDMTKGREYTFYDGPRTCHIQIGLEPFTQEIRQILIETAKKYNRTHDGGCYVCIEGPRFSTKAESRIWREVFGCDIIGMTLVPEINLARELGMCYGLIALVTDYDIWVPHQPVTAEAVEKMMTEKLGIIKKVIAEAVPKLPAELPKCSETLKYACV</sequence>
<keyword id="KW-0328">Glycosyltransferase</keyword>
<keyword id="KW-0660">Purine salvage</keyword>
<keyword id="KW-1185">Reference proteome</keyword>
<keyword id="KW-0808">Transferase</keyword>
<proteinExistence type="inferred from homology"/>
<evidence type="ECO:0000255" key="1">
    <source>
        <dbReference type="HAMAP-Rule" id="MF_01963"/>
    </source>
</evidence>
<comment type="function">
    <text evidence="1">Catalyzes the reversible phosphorylation of S-methyl-5'-thioadenosine (MTA) to adenine and 5-methylthioribose-1-phosphate. Involved in the breakdown of MTA, a major by-product of polyamine biosynthesis. Responsible for the first step in the methionine salvage pathway after MTA has been generated from S-adenosylmethionine. Has broad substrate specificity with 6-aminopurine nucleosides as preferred substrates.</text>
</comment>
<comment type="catalytic activity">
    <reaction evidence="1">
        <text>S-methyl-5'-thioadenosine + phosphate = 5-(methylsulfanyl)-alpha-D-ribose 1-phosphate + adenine</text>
        <dbReference type="Rhea" id="RHEA:11852"/>
        <dbReference type="ChEBI" id="CHEBI:16708"/>
        <dbReference type="ChEBI" id="CHEBI:17509"/>
        <dbReference type="ChEBI" id="CHEBI:43474"/>
        <dbReference type="ChEBI" id="CHEBI:58533"/>
        <dbReference type="EC" id="2.4.2.28"/>
    </reaction>
</comment>
<comment type="pathway">
    <text evidence="1">Amino-acid biosynthesis; L-methionine biosynthesis via salvage pathway; S-methyl-5-thio-alpha-D-ribose 1-phosphate from S-methyl-5'-thioadenosine (phosphorylase route): step 1/1.</text>
</comment>
<comment type="subunit">
    <text evidence="1">Homohexamer. Dimer of a homotrimer.</text>
</comment>
<comment type="similarity">
    <text evidence="1">Belongs to the PNP/MTAP phosphorylase family. MTAP subfamily.</text>
</comment>
<feature type="chain" id="PRO_0000415106" description="S-methyl-5'-thioadenosine phosphorylase">
    <location>
        <begin position="1"/>
        <end position="279"/>
    </location>
</feature>
<feature type="binding site" evidence="1">
    <location>
        <position position="28"/>
    </location>
    <ligand>
        <name>phosphate</name>
        <dbReference type="ChEBI" id="CHEBI:43474"/>
    </ligand>
</feature>
<feature type="binding site" evidence="1">
    <location>
        <begin position="70"/>
        <end position="71"/>
    </location>
    <ligand>
        <name>phosphate</name>
        <dbReference type="ChEBI" id="CHEBI:43474"/>
    </ligand>
</feature>
<feature type="binding site" evidence="1">
    <location>
        <begin position="103"/>
        <end position="104"/>
    </location>
    <ligand>
        <name>phosphate</name>
        <dbReference type="ChEBI" id="CHEBI:43474"/>
    </ligand>
</feature>
<feature type="binding site" evidence="1">
    <location>
        <position position="202"/>
    </location>
    <ligand>
        <name>substrate</name>
    </ligand>
</feature>
<feature type="binding site" evidence="1">
    <location>
        <position position="203"/>
    </location>
    <ligand>
        <name>phosphate</name>
        <dbReference type="ChEBI" id="CHEBI:43474"/>
    </ligand>
</feature>
<feature type="binding site" evidence="1">
    <location>
        <begin position="226"/>
        <end position="228"/>
    </location>
    <ligand>
        <name>substrate</name>
    </ligand>
</feature>
<feature type="site" description="Important for substrate specificity" evidence="1">
    <location>
        <position position="183"/>
    </location>
</feature>
<feature type="site" description="Important for substrate specificity" evidence="1">
    <location>
        <position position="238"/>
    </location>
</feature>
<organism>
    <name type="scientific">Pyrobaculum aerophilum (strain ATCC 51768 / DSM 7523 / JCM 9630 / CIP 104966 / NBRC 100827 / IM2)</name>
    <dbReference type="NCBI Taxonomy" id="178306"/>
    <lineage>
        <taxon>Archaea</taxon>
        <taxon>Thermoproteota</taxon>
        <taxon>Thermoprotei</taxon>
        <taxon>Thermoproteales</taxon>
        <taxon>Thermoproteaceae</taxon>
        <taxon>Pyrobaculum</taxon>
    </lineage>
</organism>
<protein>
    <recommendedName>
        <fullName evidence="1">S-methyl-5'-thioadenosine phosphorylase</fullName>
        <ecNumber evidence="1">2.4.2.28</ecNumber>
    </recommendedName>
    <alternativeName>
        <fullName evidence="1">5'-methylthioadenosine phosphorylase</fullName>
        <shortName evidence="1">MTA phosphorylase</shortName>
        <shortName evidence="1">MTAP</shortName>
    </alternativeName>
</protein>
<reference key="1">
    <citation type="journal article" date="2002" name="Proc. Natl. Acad. Sci. U.S.A.">
        <title>Genome sequence of the hyperthermophilic crenarchaeon Pyrobaculum aerophilum.</title>
        <authorList>
            <person name="Fitz-Gibbon S.T."/>
            <person name="Ladner H."/>
            <person name="Kim U.-J."/>
            <person name="Stetter K.O."/>
            <person name="Simon M.I."/>
            <person name="Miller J.H."/>
        </authorList>
    </citation>
    <scope>NUCLEOTIDE SEQUENCE [LARGE SCALE GENOMIC DNA]</scope>
    <source>
        <strain>ATCC 51768 / DSM 7523 / JCM 9630 / CIP 104966 / NBRC 100827 / IM2</strain>
    </source>
</reference>
<dbReference type="EC" id="2.4.2.28" evidence="1"/>
<dbReference type="EMBL" id="AE009441">
    <property type="protein sequence ID" value="AAL64851.1"/>
    <property type="molecule type" value="Genomic_DNA"/>
</dbReference>
<dbReference type="RefSeq" id="WP_011009318.1">
    <property type="nucleotide sequence ID" value="NC_003364.1"/>
</dbReference>
<dbReference type="SMR" id="Q8ZTB2"/>
<dbReference type="FunCoup" id="Q8ZTB2">
    <property type="interactions" value="214"/>
</dbReference>
<dbReference type="STRING" id="178306.PAE3338"/>
<dbReference type="EnsemblBacteria" id="AAL64851">
    <property type="protein sequence ID" value="AAL64851"/>
    <property type="gene ID" value="PAE3338"/>
</dbReference>
<dbReference type="GeneID" id="1464041"/>
<dbReference type="KEGG" id="pai:PAE3338"/>
<dbReference type="PATRIC" id="fig|178306.9.peg.2515"/>
<dbReference type="eggNOG" id="arCOG01327">
    <property type="taxonomic scope" value="Archaea"/>
</dbReference>
<dbReference type="HOGENOM" id="CLU_054456_0_2_2"/>
<dbReference type="InParanoid" id="Q8ZTB2"/>
<dbReference type="UniPathway" id="UPA00904">
    <property type="reaction ID" value="UER00873"/>
</dbReference>
<dbReference type="Proteomes" id="UP000002439">
    <property type="component" value="Chromosome"/>
</dbReference>
<dbReference type="GO" id="GO:0005829">
    <property type="term" value="C:cytosol"/>
    <property type="evidence" value="ECO:0000318"/>
    <property type="project" value="GO_Central"/>
</dbReference>
<dbReference type="GO" id="GO:0017061">
    <property type="term" value="F:S-methyl-5-thioadenosine phosphorylase activity"/>
    <property type="evidence" value="ECO:0000318"/>
    <property type="project" value="GO_Central"/>
</dbReference>
<dbReference type="GO" id="GO:0019509">
    <property type="term" value="P:L-methionine salvage from methylthioadenosine"/>
    <property type="evidence" value="ECO:0000318"/>
    <property type="project" value="GO_Central"/>
</dbReference>
<dbReference type="GO" id="GO:0006166">
    <property type="term" value="P:purine ribonucleoside salvage"/>
    <property type="evidence" value="ECO:0007669"/>
    <property type="project" value="UniProtKB-KW"/>
</dbReference>
<dbReference type="CDD" id="cd09010">
    <property type="entry name" value="MTAP_SsMTAPII_like_MTIP"/>
    <property type="match status" value="1"/>
</dbReference>
<dbReference type="FunFam" id="3.40.50.1580:FF:000012">
    <property type="entry name" value="Probable 6-oxopurine nucleoside phosphorylase"/>
    <property type="match status" value="1"/>
</dbReference>
<dbReference type="Gene3D" id="3.40.50.1580">
    <property type="entry name" value="Nucleoside phosphorylase domain"/>
    <property type="match status" value="1"/>
</dbReference>
<dbReference type="HAMAP" id="MF_01963">
    <property type="entry name" value="MTAP"/>
    <property type="match status" value="1"/>
</dbReference>
<dbReference type="InterPro" id="IPR010044">
    <property type="entry name" value="MTAP"/>
</dbReference>
<dbReference type="InterPro" id="IPR000845">
    <property type="entry name" value="Nucleoside_phosphorylase_d"/>
</dbReference>
<dbReference type="InterPro" id="IPR035994">
    <property type="entry name" value="Nucleoside_phosphorylase_sf"/>
</dbReference>
<dbReference type="NCBIfam" id="TIGR01694">
    <property type="entry name" value="MTAP"/>
    <property type="match status" value="1"/>
</dbReference>
<dbReference type="NCBIfam" id="NF006334">
    <property type="entry name" value="PRK08564.1"/>
    <property type="match status" value="1"/>
</dbReference>
<dbReference type="PANTHER" id="PTHR42679">
    <property type="entry name" value="S-METHYL-5'-THIOADENOSINE PHOSPHORYLASE"/>
    <property type="match status" value="1"/>
</dbReference>
<dbReference type="PANTHER" id="PTHR42679:SF3">
    <property type="entry name" value="S-METHYL-5'-THIOADENOSINE PHOSPHORYLASE"/>
    <property type="match status" value="1"/>
</dbReference>
<dbReference type="Pfam" id="PF01048">
    <property type="entry name" value="PNP_UDP_1"/>
    <property type="match status" value="1"/>
</dbReference>
<dbReference type="SUPFAM" id="SSF53167">
    <property type="entry name" value="Purine and uridine phosphorylases"/>
    <property type="match status" value="1"/>
</dbReference>
<gene>
    <name evidence="1" type="primary">mtnP</name>
    <name type="ordered locus">PAE3338</name>
</gene>